<sequence>MDKLRITGGSPLRGEVTVSGAKNAALPILCASLLTAEPLVLGNVPQLNDTSTTLRLLGRMGVRAERAGDGTVTLQADQVDNLEAPYELVKTMRASILVLGPLLARFGQARVSLPGGCAIGQRPVDQHIKGLAALGAEIEIEHGFVVARATRLKGASIRTDMVTVTGTENLLMAAVLAEGQTVLENAAREPEVVDLAELLIKMGARIQGHGTDRIVVDGVARLHGARHDVIADRIEAGTFLCAVGAAGGDITLRGAAPDTMGATLDKLVEAGLTIETGPDWIRGAMHGRPRAVGARTHEYPGFATDMQAQLMALDTVADGTAVIVENIFENRYMHVQELCRLGADIDIDGHTAVVRGVARLSGATVMATDLRASASLVIAGLAAEGETLVDRIYHLDRGYDRMEVKLRALGASIQRVTGKETA</sequence>
<accession>Q7WDY6</accession>
<keyword id="KW-0131">Cell cycle</keyword>
<keyword id="KW-0132">Cell division</keyword>
<keyword id="KW-0133">Cell shape</keyword>
<keyword id="KW-0961">Cell wall biogenesis/degradation</keyword>
<keyword id="KW-0963">Cytoplasm</keyword>
<keyword id="KW-0573">Peptidoglycan synthesis</keyword>
<keyword id="KW-0670">Pyruvate</keyword>
<keyword id="KW-0808">Transferase</keyword>
<proteinExistence type="inferred from homology"/>
<reference key="1">
    <citation type="journal article" date="2003" name="Nat. Genet.">
        <title>Comparative analysis of the genome sequences of Bordetella pertussis, Bordetella parapertussis and Bordetella bronchiseptica.</title>
        <authorList>
            <person name="Parkhill J."/>
            <person name="Sebaihia M."/>
            <person name="Preston A."/>
            <person name="Murphy L.D."/>
            <person name="Thomson N.R."/>
            <person name="Harris D.E."/>
            <person name="Holden M.T.G."/>
            <person name="Churcher C.M."/>
            <person name="Bentley S.D."/>
            <person name="Mungall K.L."/>
            <person name="Cerdeno-Tarraga A.-M."/>
            <person name="Temple L."/>
            <person name="James K.D."/>
            <person name="Harris B."/>
            <person name="Quail M.A."/>
            <person name="Achtman M."/>
            <person name="Atkin R."/>
            <person name="Baker S."/>
            <person name="Basham D."/>
            <person name="Bason N."/>
            <person name="Cherevach I."/>
            <person name="Chillingworth T."/>
            <person name="Collins M."/>
            <person name="Cronin A."/>
            <person name="Davis P."/>
            <person name="Doggett J."/>
            <person name="Feltwell T."/>
            <person name="Goble A."/>
            <person name="Hamlin N."/>
            <person name="Hauser H."/>
            <person name="Holroyd S."/>
            <person name="Jagels K."/>
            <person name="Leather S."/>
            <person name="Moule S."/>
            <person name="Norberczak H."/>
            <person name="O'Neil S."/>
            <person name="Ormond D."/>
            <person name="Price C."/>
            <person name="Rabbinowitsch E."/>
            <person name="Rutter S."/>
            <person name="Sanders M."/>
            <person name="Saunders D."/>
            <person name="Seeger K."/>
            <person name="Sharp S."/>
            <person name="Simmonds M."/>
            <person name="Skelton J."/>
            <person name="Squares R."/>
            <person name="Squares S."/>
            <person name="Stevens K."/>
            <person name="Unwin L."/>
            <person name="Whitehead S."/>
            <person name="Barrell B.G."/>
            <person name="Maskell D.J."/>
        </authorList>
    </citation>
    <scope>NUCLEOTIDE SEQUENCE [LARGE SCALE GENOMIC DNA]</scope>
    <source>
        <strain>ATCC BAA-588 / NCTC 13252 / RB50</strain>
    </source>
</reference>
<feature type="chain" id="PRO_0000231174" description="UDP-N-acetylglucosamine 1-carboxyvinyltransferase">
    <location>
        <begin position="1"/>
        <end position="422"/>
    </location>
</feature>
<feature type="active site" description="Proton donor" evidence="1">
    <location>
        <position position="117"/>
    </location>
</feature>
<feature type="binding site" evidence="1">
    <location>
        <begin position="22"/>
        <end position="23"/>
    </location>
    <ligand>
        <name>phosphoenolpyruvate</name>
        <dbReference type="ChEBI" id="CHEBI:58702"/>
    </ligand>
</feature>
<feature type="binding site" evidence="1">
    <location>
        <position position="93"/>
    </location>
    <ligand>
        <name>UDP-N-acetyl-alpha-D-glucosamine</name>
        <dbReference type="ChEBI" id="CHEBI:57705"/>
    </ligand>
</feature>
<feature type="binding site" evidence="1">
    <location>
        <begin position="122"/>
        <end position="126"/>
    </location>
    <ligand>
        <name>UDP-N-acetyl-alpha-D-glucosamine</name>
        <dbReference type="ChEBI" id="CHEBI:57705"/>
    </ligand>
</feature>
<feature type="binding site" evidence="1">
    <location>
        <position position="305"/>
    </location>
    <ligand>
        <name>UDP-N-acetyl-alpha-D-glucosamine</name>
        <dbReference type="ChEBI" id="CHEBI:57705"/>
    </ligand>
</feature>
<feature type="binding site" evidence="1">
    <location>
        <position position="327"/>
    </location>
    <ligand>
        <name>UDP-N-acetyl-alpha-D-glucosamine</name>
        <dbReference type="ChEBI" id="CHEBI:57705"/>
    </ligand>
</feature>
<feature type="modified residue" description="2-(S-cysteinyl)pyruvic acid O-phosphothioketal" evidence="1">
    <location>
        <position position="117"/>
    </location>
</feature>
<name>MURA_BORBR</name>
<organism>
    <name type="scientific">Bordetella bronchiseptica (strain ATCC BAA-588 / NCTC 13252 / RB50)</name>
    <name type="common">Alcaligenes bronchisepticus</name>
    <dbReference type="NCBI Taxonomy" id="257310"/>
    <lineage>
        <taxon>Bacteria</taxon>
        <taxon>Pseudomonadati</taxon>
        <taxon>Pseudomonadota</taxon>
        <taxon>Betaproteobacteria</taxon>
        <taxon>Burkholderiales</taxon>
        <taxon>Alcaligenaceae</taxon>
        <taxon>Bordetella</taxon>
    </lineage>
</organism>
<dbReference type="EC" id="2.5.1.7" evidence="1"/>
<dbReference type="EMBL" id="BX640451">
    <property type="protein sequence ID" value="CAE35215.1"/>
    <property type="molecule type" value="Genomic_DNA"/>
</dbReference>
<dbReference type="RefSeq" id="WP_010927222.1">
    <property type="nucleotide sequence ID" value="NC_002927.3"/>
</dbReference>
<dbReference type="SMR" id="Q7WDY6"/>
<dbReference type="GeneID" id="69600007"/>
<dbReference type="KEGG" id="bbr:BB4852"/>
<dbReference type="eggNOG" id="COG0766">
    <property type="taxonomic scope" value="Bacteria"/>
</dbReference>
<dbReference type="HOGENOM" id="CLU_027387_0_0_4"/>
<dbReference type="UniPathway" id="UPA00219"/>
<dbReference type="Proteomes" id="UP000001027">
    <property type="component" value="Chromosome"/>
</dbReference>
<dbReference type="GO" id="GO:0005737">
    <property type="term" value="C:cytoplasm"/>
    <property type="evidence" value="ECO:0007669"/>
    <property type="project" value="UniProtKB-SubCell"/>
</dbReference>
<dbReference type="GO" id="GO:0008760">
    <property type="term" value="F:UDP-N-acetylglucosamine 1-carboxyvinyltransferase activity"/>
    <property type="evidence" value="ECO:0007669"/>
    <property type="project" value="UniProtKB-UniRule"/>
</dbReference>
<dbReference type="GO" id="GO:0051301">
    <property type="term" value="P:cell division"/>
    <property type="evidence" value="ECO:0007669"/>
    <property type="project" value="UniProtKB-KW"/>
</dbReference>
<dbReference type="GO" id="GO:0071555">
    <property type="term" value="P:cell wall organization"/>
    <property type="evidence" value="ECO:0007669"/>
    <property type="project" value="UniProtKB-KW"/>
</dbReference>
<dbReference type="GO" id="GO:0009252">
    <property type="term" value="P:peptidoglycan biosynthetic process"/>
    <property type="evidence" value="ECO:0007669"/>
    <property type="project" value="UniProtKB-UniRule"/>
</dbReference>
<dbReference type="GO" id="GO:0008360">
    <property type="term" value="P:regulation of cell shape"/>
    <property type="evidence" value="ECO:0007669"/>
    <property type="project" value="UniProtKB-KW"/>
</dbReference>
<dbReference type="GO" id="GO:0019277">
    <property type="term" value="P:UDP-N-acetylgalactosamine biosynthetic process"/>
    <property type="evidence" value="ECO:0007669"/>
    <property type="project" value="InterPro"/>
</dbReference>
<dbReference type="CDD" id="cd01555">
    <property type="entry name" value="UdpNAET"/>
    <property type="match status" value="1"/>
</dbReference>
<dbReference type="FunFam" id="3.65.10.10:FF:000001">
    <property type="entry name" value="UDP-N-acetylglucosamine 1-carboxyvinyltransferase"/>
    <property type="match status" value="1"/>
</dbReference>
<dbReference type="Gene3D" id="3.65.10.10">
    <property type="entry name" value="Enolpyruvate transferase domain"/>
    <property type="match status" value="2"/>
</dbReference>
<dbReference type="HAMAP" id="MF_00111">
    <property type="entry name" value="MurA"/>
    <property type="match status" value="1"/>
</dbReference>
<dbReference type="InterPro" id="IPR001986">
    <property type="entry name" value="Enolpyruvate_Tfrase_dom"/>
</dbReference>
<dbReference type="InterPro" id="IPR036968">
    <property type="entry name" value="Enolpyruvate_Tfrase_sf"/>
</dbReference>
<dbReference type="InterPro" id="IPR050068">
    <property type="entry name" value="MurA_subfamily"/>
</dbReference>
<dbReference type="InterPro" id="IPR013792">
    <property type="entry name" value="RNA3'P_cycl/enolpyr_Trfase_a/b"/>
</dbReference>
<dbReference type="InterPro" id="IPR005750">
    <property type="entry name" value="UDP_GlcNAc_COvinyl_MurA"/>
</dbReference>
<dbReference type="NCBIfam" id="TIGR01072">
    <property type="entry name" value="murA"/>
    <property type="match status" value="1"/>
</dbReference>
<dbReference type="NCBIfam" id="NF006873">
    <property type="entry name" value="PRK09369.1"/>
    <property type="match status" value="1"/>
</dbReference>
<dbReference type="PANTHER" id="PTHR43783">
    <property type="entry name" value="UDP-N-ACETYLGLUCOSAMINE 1-CARBOXYVINYLTRANSFERASE"/>
    <property type="match status" value="1"/>
</dbReference>
<dbReference type="PANTHER" id="PTHR43783:SF1">
    <property type="entry name" value="UDP-N-ACETYLGLUCOSAMINE 1-CARBOXYVINYLTRANSFERASE"/>
    <property type="match status" value="1"/>
</dbReference>
<dbReference type="Pfam" id="PF00275">
    <property type="entry name" value="EPSP_synthase"/>
    <property type="match status" value="1"/>
</dbReference>
<dbReference type="SUPFAM" id="SSF55205">
    <property type="entry name" value="EPT/RTPC-like"/>
    <property type="match status" value="1"/>
</dbReference>
<evidence type="ECO:0000255" key="1">
    <source>
        <dbReference type="HAMAP-Rule" id="MF_00111"/>
    </source>
</evidence>
<protein>
    <recommendedName>
        <fullName evidence="1">UDP-N-acetylglucosamine 1-carboxyvinyltransferase</fullName>
        <ecNumber evidence="1">2.5.1.7</ecNumber>
    </recommendedName>
    <alternativeName>
        <fullName evidence="1">Enoylpyruvate transferase</fullName>
    </alternativeName>
    <alternativeName>
        <fullName evidence="1">UDP-N-acetylglucosamine enolpyruvyl transferase</fullName>
        <shortName evidence="1">EPT</shortName>
    </alternativeName>
</protein>
<gene>
    <name evidence="1" type="primary">murA</name>
    <name type="synonym">murZ</name>
    <name type="ordered locus">BB4852</name>
</gene>
<comment type="function">
    <text evidence="1">Cell wall formation. Adds enolpyruvyl to UDP-N-acetylglucosamine.</text>
</comment>
<comment type="catalytic activity">
    <reaction evidence="1">
        <text>phosphoenolpyruvate + UDP-N-acetyl-alpha-D-glucosamine = UDP-N-acetyl-3-O-(1-carboxyvinyl)-alpha-D-glucosamine + phosphate</text>
        <dbReference type="Rhea" id="RHEA:18681"/>
        <dbReference type="ChEBI" id="CHEBI:43474"/>
        <dbReference type="ChEBI" id="CHEBI:57705"/>
        <dbReference type="ChEBI" id="CHEBI:58702"/>
        <dbReference type="ChEBI" id="CHEBI:68483"/>
        <dbReference type="EC" id="2.5.1.7"/>
    </reaction>
</comment>
<comment type="pathway">
    <text evidence="1">Cell wall biogenesis; peptidoglycan biosynthesis.</text>
</comment>
<comment type="subcellular location">
    <subcellularLocation>
        <location evidence="1">Cytoplasm</location>
    </subcellularLocation>
</comment>
<comment type="similarity">
    <text evidence="1">Belongs to the EPSP synthase family. MurA subfamily.</text>
</comment>